<protein>
    <recommendedName>
        <fullName evidence="1">Non-structural glycoprotein 4</fullName>
        <shortName evidence="1">NSP4</shortName>
    </recommendedName>
    <alternativeName>
        <fullName evidence="1">NCVP5</fullName>
    </alternativeName>
    <alternativeName>
        <fullName evidence="1">NS28</fullName>
    </alternativeName>
</protein>
<organism>
    <name type="scientific">Rotavirus A (strain RVA/Cow/United States/NCDV-Lincoln/1969/G6P6[1])</name>
    <name type="common">RV-A</name>
    <name type="synonym">Rotavirus A (strain Nebraska calf diarrhea virus)</name>
    <dbReference type="NCBI Taxonomy" id="36439"/>
    <lineage>
        <taxon>Viruses</taxon>
        <taxon>Riboviria</taxon>
        <taxon>Orthornavirae</taxon>
        <taxon>Duplornaviricota</taxon>
        <taxon>Resentoviricetes</taxon>
        <taxon>Reovirales</taxon>
        <taxon>Sedoreoviridae</taxon>
        <taxon>Rotavirus</taxon>
        <taxon>Rotavirus A</taxon>
    </lineage>
</organism>
<dbReference type="EMBL" id="X06806">
    <property type="protein sequence ID" value="CAA29959.1"/>
    <property type="molecule type" value="Genomic_RNA"/>
</dbReference>
<dbReference type="PIR" id="S01888">
    <property type="entry name" value="VGXRP5"/>
</dbReference>
<dbReference type="PDB" id="5Y2E">
    <property type="method" value="X-ray"/>
    <property type="resolution" value="2.70 A"/>
    <property type="chains" value="A/B/C/D=95-140"/>
</dbReference>
<dbReference type="PDBsum" id="5Y2E"/>
<dbReference type="SMR" id="P08434"/>
<dbReference type="iPTMnet" id="P08434"/>
<dbReference type="GO" id="GO:0005576">
    <property type="term" value="C:extracellular region"/>
    <property type="evidence" value="ECO:0007669"/>
    <property type="project" value="UniProtKB-SubCell"/>
</dbReference>
<dbReference type="GO" id="GO:0044155">
    <property type="term" value="C:host caveola"/>
    <property type="evidence" value="ECO:0007669"/>
    <property type="project" value="UniProtKB-SubCell"/>
</dbReference>
<dbReference type="GO" id="GO:0044169">
    <property type="term" value="C:host cell rough endoplasmic reticulum membrane"/>
    <property type="evidence" value="ECO:0007669"/>
    <property type="project" value="UniProtKB-SubCell"/>
</dbReference>
<dbReference type="GO" id="GO:0016020">
    <property type="term" value="C:membrane"/>
    <property type="evidence" value="ECO:0007669"/>
    <property type="project" value="UniProtKB-UniRule"/>
</dbReference>
<dbReference type="GO" id="GO:0015267">
    <property type="term" value="F:channel activity"/>
    <property type="evidence" value="ECO:0007669"/>
    <property type="project" value="UniProtKB-KW"/>
</dbReference>
<dbReference type="GO" id="GO:0046872">
    <property type="term" value="F:metal ion binding"/>
    <property type="evidence" value="ECO:0007669"/>
    <property type="project" value="UniProtKB-UniRule"/>
</dbReference>
<dbReference type="GO" id="GO:0090729">
    <property type="term" value="F:toxin activity"/>
    <property type="evidence" value="ECO:0007669"/>
    <property type="project" value="UniProtKB-UniRule"/>
</dbReference>
<dbReference type="GO" id="GO:0034220">
    <property type="term" value="P:monoatomic ion transmembrane transport"/>
    <property type="evidence" value="ECO:0007669"/>
    <property type="project" value="UniProtKB-KW"/>
</dbReference>
<dbReference type="GO" id="GO:0039520">
    <property type="term" value="P:symbiont-mediated activation of host autophagy"/>
    <property type="evidence" value="ECO:0007669"/>
    <property type="project" value="UniProtKB-KW"/>
</dbReference>
<dbReference type="GO" id="GO:0016032">
    <property type="term" value="P:viral process"/>
    <property type="evidence" value="ECO:0007669"/>
    <property type="project" value="UniProtKB-UniRule"/>
</dbReference>
<dbReference type="Gene3D" id="1.20.5.430">
    <property type="match status" value="1"/>
</dbReference>
<dbReference type="HAMAP" id="MF_04091">
    <property type="entry name" value="ROTA_NSP4"/>
    <property type="match status" value="1"/>
</dbReference>
<dbReference type="InterPro" id="IPR002107">
    <property type="entry name" value="Rotavirus_NSP4"/>
</dbReference>
<dbReference type="Pfam" id="PF01452">
    <property type="entry name" value="Rota_NSP4"/>
    <property type="match status" value="1"/>
</dbReference>
<dbReference type="SUPFAM" id="SSF58030">
    <property type="entry name" value="Rotavirus nonstructural proteins"/>
    <property type="match status" value="1"/>
</dbReference>
<proteinExistence type="evidence at protein level"/>
<keyword id="KW-0002">3D-structure</keyword>
<keyword id="KW-1072">Activation of host autophagy by virus</keyword>
<keyword id="KW-0106">Calcium</keyword>
<keyword id="KW-0260">Enterotoxin</keyword>
<keyword id="KW-0325">Glycoprotein</keyword>
<keyword id="KW-1038">Host endoplasmic reticulum</keyword>
<keyword id="KW-1043">Host membrane</keyword>
<keyword id="KW-0945">Host-virus interaction</keyword>
<keyword id="KW-0407">Ion channel</keyword>
<keyword id="KW-0406">Ion transport</keyword>
<keyword id="KW-0472">Membrane</keyword>
<keyword id="KW-0479">Metal-binding</keyword>
<keyword id="KW-0964">Secreted</keyword>
<keyword id="KW-0735">Signal-anchor</keyword>
<keyword id="KW-0800">Toxin</keyword>
<keyword id="KW-0812">Transmembrane</keyword>
<keyword id="KW-1133">Transmembrane helix</keyword>
<keyword id="KW-0813">Transport</keyword>
<keyword id="KW-1182">Viral ion channel</keyword>
<keyword id="KW-0843">Virulence</keyword>
<organismHost>
    <name type="scientific">Bos taurus</name>
    <name type="common">Bovine</name>
    <dbReference type="NCBI Taxonomy" id="9913"/>
</organismHost>
<comment type="function">
    <text evidence="1">Plays an essential role in the virus replication cycle by acting as a viroporin. Creates a pore in the host endoplasmic reticulum and as a consequence releases Ca(2+) in the cytoplasm of infected cell. In turn, high levels of cytoplasmic calcium trigger membrane trafficking and transport of viral ER-associated proteins to viroplasms, sites of viral genome replication and immature particle assembly.</text>
</comment>
<comment type="function">
    <text evidence="1">The secreted form acts as an enterotoxin that causes phospholipase C-dependent elevation of the intracellular calcium concentration in host intestinal mucosa cells. Increased concentration of intracellular calcium disrupts the cytoskeleton and the tight junctions, raising the paracellular permeability. Potentiates chloride ion secretion through a calcium ion-dependent signaling pathway, inducing age-dependent diarrhea. To perform this enterotoxigenic role in vivo, NSP4 is released from infected enterocytes in a soluble form capable of diffusing within the intestinal lumen and interacting with host plasma membrane receptors on neighboring epithelial cells such as integrins ITGA1/ITGB1 and ITGA2/ITGB1.</text>
</comment>
<comment type="subunit">
    <text evidence="1">Homotetramer. Interacts with the immature particle in the viroplasm. Interacts with host CAV1, early and late in infection. Interacts with host integrin ITGA1/ITGB1 heterodimer. Interacts with host integrin ITGA2/ITGB1 heterodimer. Interaction with microtubules blocks trafficking to the Golgi apparatus.</text>
</comment>
<comment type="subcellular location">
    <subcellularLocation>
        <location evidence="1 2">Host rough endoplasmic reticulum membrane</location>
        <topology evidence="1">Single-pass type III membrane protein</topology>
    </subcellularLocation>
    <subcellularLocation>
        <location evidence="1">Host membrane</location>
        <location evidence="1">Host caveola</location>
        <topology evidence="1">Single-pass type III membrane protein</topology>
    </subcellularLocation>
    <subcellularLocation>
        <location evidence="1">Secreted</location>
    </subcellularLocation>
    <text evidence="1">NSP4 also localizes in vesicular structures which contain autophagosomal markers and associate with viroplasms in virus-infected cells. Additionally, a soluble form of glycosylated NSP4 is secreted despite retention of its transmembrane domain.</text>
</comment>
<comment type="domain">
    <text>A disordered 28 aa C-terminal domain is presented to the cytoplasm by each subunit of the tetrameric receptor.</text>
</comment>
<comment type="domain">
    <text evidence="1">Binds 1 calcium ion per tetramer.</text>
</comment>
<comment type="PTM">
    <text>Mannosylated.</text>
</comment>
<comment type="PTM">
    <text evidence="1">The N-glycosyl content is primarily Man(9)GlcNAc, with a small amount of Man(8)GlcNAc.</text>
</comment>
<comment type="similarity">
    <text evidence="1">Belongs to the rotavirus NSP4 family.</text>
</comment>
<reference key="1">
    <citation type="journal article" date="1988" name="Nucleic Acids Res.">
        <title>Nucleotide sequence of bovine rotavirus genomic segment 10: an RNA encoding the viral nonstructural glycoprotein.</title>
        <authorList>
            <person name="Powell K.F.H."/>
            <person name="Gunn P.R."/>
            <person name="Bellamy A.R."/>
        </authorList>
    </citation>
    <scope>NUCLEOTIDE SEQUENCE [GENOMIC RNA]</scope>
</reference>
<reference key="2">
    <citation type="journal article" date="1989" name="EMBO J.">
        <title>Topology of the non-structural rotavirus receptor glycoprotein NS28 in the rough endoplasmic reticulum.</title>
        <authorList>
            <person name="Bergmann C.C."/>
            <person name="Maass D."/>
            <person name="Poruchynsky M.S."/>
            <person name="Atkinson P.H."/>
            <person name="Bellamy A.R."/>
        </authorList>
    </citation>
    <scope>TOPOLOGY</scope>
    <scope>SUBCELLULAR LOCATION</scope>
    <scope>GLYCOSYLATION AT ASN-8 AND ASN-18</scope>
    <scope>STRUCTURE OF CARBOHYDRATE</scope>
</reference>
<evidence type="ECO:0000255" key="1">
    <source>
        <dbReference type="HAMAP-Rule" id="MF_04091"/>
    </source>
</evidence>
<evidence type="ECO:0000269" key="2">
    <source>
    </source>
</evidence>
<evidence type="ECO:0007829" key="3">
    <source>
        <dbReference type="PDB" id="5Y2E"/>
    </source>
</evidence>
<feature type="chain" id="PRO_0000149622" description="Non-structural glycoprotein 4">
    <location>
        <begin position="1"/>
        <end position="175"/>
    </location>
</feature>
<feature type="topological domain" description="Lumenal" evidence="1 2">
    <location>
        <begin position="1"/>
        <end position="28"/>
    </location>
</feature>
<feature type="transmembrane region" description="Helical; Signal-anchor for type III membrane protein" evidence="1">
    <location>
        <begin position="29"/>
        <end position="51"/>
    </location>
</feature>
<feature type="topological domain" description="Cytoplasmic" evidence="1 2">
    <location>
        <begin position="52"/>
        <end position="175"/>
    </location>
</feature>
<feature type="region of interest" description="Hydrophobic">
    <location>
        <begin position="7"/>
        <end position="21"/>
    </location>
</feature>
<feature type="region of interest" description="Hydrophobic">
    <location>
        <begin position="67"/>
        <end position="85"/>
    </location>
</feature>
<feature type="binding site" evidence="1">
    <location>
        <position position="120"/>
    </location>
    <ligand>
        <name>Ca(2+)</name>
        <dbReference type="ChEBI" id="CHEBI:29108"/>
    </ligand>
</feature>
<feature type="binding site" evidence="1">
    <location>
        <position position="123"/>
    </location>
    <ligand>
        <name>Ca(2+)</name>
        <dbReference type="ChEBI" id="CHEBI:29108"/>
    </ligand>
</feature>
<feature type="glycosylation site" description="N-linked (GlcNAc...) asparagine; by host" evidence="1 2">
    <location>
        <position position="8"/>
    </location>
</feature>
<feature type="glycosylation site" description="N-linked (GlcNAc...) asparagine; by host" evidence="1 2">
    <location>
        <position position="18"/>
    </location>
</feature>
<feature type="helix" evidence="3">
    <location>
        <begin position="95"/>
        <end position="138"/>
    </location>
</feature>
<accession>P08434</accession>
<sequence length="175" mass="20380">MEKLTDLNYTSSVITLMNSTLHTILEDPGMAYFPYIASVLTVLFTLHKASIPTMKIALKTSKCSYKVVKYCIVTIFNTLLKLAGYKEQITTKDEIEKQMDRVVKEMRRQLEMIDKLTTREIEQVELLKRIHDKLMIRAVDEIDMTKEINQKNVRTLEEWENGKNPYEPKEVTAAM</sequence>
<name>NSP4_ROTBN</name>